<evidence type="ECO:0000256" key="1">
    <source>
        <dbReference type="SAM" id="MobiDB-lite"/>
    </source>
</evidence>
<accession>Q9ZDG5</accession>
<sequence length="386" mass="44346">MATKNKKEIVNTETKNLANLIIKEISKESFDFGILQKMQQAFSTASKQKQREAFINILDTKLDKEQLHKLNQTIMKNANELMPDNDPNFVCRTSNNKVFQEILLLEAKRSGMQARFSDTGALQSLDIKDITPEILDHYRVLQEKFYLKRNSKDSVDSRIAQSINFLLYAPLFRESDIYKKLGLKSAEIEREIQDPNGKYVQQLIDAKIGSNIPFHMQKNNVNEGKEIERTAIIEKAITKFEQDKKFSFEGKKRDEITKYLSKSLEGASDYILTFKKNELVDVIYQGLDKGQTLWSKVANYIGIKSYSISKENLKSVAKIINDKIKSSHTPLKIEVQDKLKQISKELNRLNNPVLPSEAQKVQVKSNKKPPIAPKPEHLKKRDHGLC</sequence>
<feature type="chain" id="PRO_0000101356" description="Uncharacterized protein RP364">
    <location>
        <begin position="1"/>
        <end position="386"/>
    </location>
</feature>
<feature type="region of interest" description="Disordered" evidence="1">
    <location>
        <begin position="355"/>
        <end position="386"/>
    </location>
</feature>
<feature type="compositionally biased region" description="Basic residues" evidence="1">
    <location>
        <begin position="377"/>
        <end position="386"/>
    </location>
</feature>
<reference key="1">
    <citation type="journal article" date="1998" name="Nature">
        <title>The genome sequence of Rickettsia prowazekii and the origin of mitochondria.</title>
        <authorList>
            <person name="Andersson S.G.E."/>
            <person name="Zomorodipour A."/>
            <person name="Andersson J.O."/>
            <person name="Sicheritz-Ponten T."/>
            <person name="Alsmark U.C.M."/>
            <person name="Podowski R.M."/>
            <person name="Naeslund A.K."/>
            <person name="Eriksson A.-S."/>
            <person name="Winkler H.H."/>
            <person name="Kurland C.G."/>
        </authorList>
    </citation>
    <scope>NUCLEOTIDE SEQUENCE [LARGE SCALE GENOMIC DNA]</scope>
    <source>
        <strain>Madrid E</strain>
    </source>
</reference>
<gene>
    <name type="ordered locus">RP364</name>
</gene>
<proteinExistence type="predicted"/>
<organism>
    <name type="scientific">Rickettsia prowazekii (strain Madrid E)</name>
    <dbReference type="NCBI Taxonomy" id="272947"/>
    <lineage>
        <taxon>Bacteria</taxon>
        <taxon>Pseudomonadati</taxon>
        <taxon>Pseudomonadota</taxon>
        <taxon>Alphaproteobacteria</taxon>
        <taxon>Rickettsiales</taxon>
        <taxon>Rickettsiaceae</taxon>
        <taxon>Rickettsieae</taxon>
        <taxon>Rickettsia</taxon>
        <taxon>typhus group</taxon>
    </lineage>
</organism>
<name>Y364_RICPR</name>
<keyword id="KW-1185">Reference proteome</keyword>
<dbReference type="EMBL" id="AJ235271">
    <property type="protein sequence ID" value="CAA14823.1"/>
    <property type="molecule type" value="Genomic_DNA"/>
</dbReference>
<dbReference type="PIR" id="E71693">
    <property type="entry name" value="E71693"/>
</dbReference>
<dbReference type="RefSeq" id="NP_220747.1">
    <property type="nucleotide sequence ID" value="NC_000963.1"/>
</dbReference>
<dbReference type="RefSeq" id="WP_004599429.1">
    <property type="nucleotide sequence ID" value="NC_000963.1"/>
</dbReference>
<dbReference type="SMR" id="Q9ZDG5"/>
<dbReference type="EnsemblBacteria" id="CAA14823">
    <property type="protein sequence ID" value="CAA14823"/>
    <property type="gene ID" value="CAA14823"/>
</dbReference>
<dbReference type="KEGG" id="rpr:RP364"/>
<dbReference type="PATRIC" id="fig|272947.5.peg.373"/>
<dbReference type="HOGENOM" id="CLU_060312_0_0_5"/>
<dbReference type="OrthoDB" id="7160941at2"/>
<dbReference type="Proteomes" id="UP000002480">
    <property type="component" value="Chromosome"/>
</dbReference>
<dbReference type="InterPro" id="IPR020168">
    <property type="entry name" value="Uncharacterised_RP363/RP364"/>
</dbReference>
<dbReference type="Pfam" id="PF17422">
    <property type="entry name" value="DUF5410"/>
    <property type="match status" value="1"/>
</dbReference>
<protein>
    <recommendedName>
        <fullName>Uncharacterized protein RP364</fullName>
    </recommendedName>
</protein>